<feature type="chain" id="PRO_0000252953" description="Fluoride-specific ion channel FluC 2">
    <location>
        <begin position="1"/>
        <end position="134"/>
    </location>
</feature>
<feature type="transmembrane region" description="Helical" evidence="1">
    <location>
        <begin position="10"/>
        <end position="30"/>
    </location>
</feature>
<feature type="transmembrane region" description="Helical" evidence="1">
    <location>
        <begin position="43"/>
        <end position="63"/>
    </location>
</feature>
<feature type="transmembrane region" description="Helical" evidence="1">
    <location>
        <begin position="67"/>
        <end position="87"/>
    </location>
</feature>
<feature type="transmembrane region" description="Helical" evidence="1">
    <location>
        <begin position="100"/>
        <end position="120"/>
    </location>
</feature>
<feature type="binding site" evidence="1">
    <location>
        <position position="75"/>
    </location>
    <ligand>
        <name>Na(+)</name>
        <dbReference type="ChEBI" id="CHEBI:29101"/>
        <note>structural</note>
    </ligand>
</feature>
<feature type="binding site" evidence="1">
    <location>
        <position position="78"/>
    </location>
    <ligand>
        <name>Na(+)</name>
        <dbReference type="ChEBI" id="CHEBI:29101"/>
        <note>structural</note>
    </ligand>
</feature>
<accession>Q3B0L7</accession>
<comment type="function">
    <text evidence="1">Fluoride-specific ion channel. Important for reducing fluoride concentration in the cell, thus reducing its toxicity.</text>
</comment>
<comment type="catalytic activity">
    <reaction evidence="1">
        <text>fluoride(in) = fluoride(out)</text>
        <dbReference type="Rhea" id="RHEA:76159"/>
        <dbReference type="ChEBI" id="CHEBI:17051"/>
    </reaction>
    <physiologicalReaction direction="left-to-right" evidence="1">
        <dbReference type="Rhea" id="RHEA:76160"/>
    </physiologicalReaction>
</comment>
<comment type="activity regulation">
    <text evidence="1">Na(+) is not transported, but it plays an essential structural role and its presence is essential for fluoride channel function.</text>
</comment>
<comment type="subcellular location">
    <subcellularLocation>
        <location evidence="1">Cell inner membrane</location>
        <topology evidence="1">Multi-pass membrane protein</topology>
    </subcellularLocation>
</comment>
<comment type="similarity">
    <text evidence="1">Belongs to the fluoride channel Fluc/FEX (TC 1.A.43) family.</text>
</comment>
<comment type="sequence caution" evidence="2">
    <conflict type="erroneous initiation">
        <sequence resource="EMBL-CDS" id="ABB25111"/>
    </conflict>
</comment>
<keyword id="KW-0997">Cell inner membrane</keyword>
<keyword id="KW-1003">Cell membrane</keyword>
<keyword id="KW-0407">Ion channel</keyword>
<keyword id="KW-0406">Ion transport</keyword>
<keyword id="KW-0472">Membrane</keyword>
<keyword id="KW-0479">Metal-binding</keyword>
<keyword id="KW-1185">Reference proteome</keyword>
<keyword id="KW-0915">Sodium</keyword>
<keyword id="KW-0812">Transmembrane</keyword>
<keyword id="KW-1133">Transmembrane helix</keyword>
<keyword id="KW-0813">Transport</keyword>
<dbReference type="EMBL" id="CP000097">
    <property type="protein sequence ID" value="ABB25111.1"/>
    <property type="status" value="ALT_INIT"/>
    <property type="molecule type" value="Genomic_DNA"/>
</dbReference>
<dbReference type="RefSeq" id="WP_049749468.1">
    <property type="nucleotide sequence ID" value="NC_007513.1"/>
</dbReference>
<dbReference type="SMR" id="Q3B0L7"/>
<dbReference type="STRING" id="316279.Syncc9902_0136"/>
<dbReference type="KEGG" id="sye:Syncc9902_0136"/>
<dbReference type="eggNOG" id="COG0239">
    <property type="taxonomic scope" value="Bacteria"/>
</dbReference>
<dbReference type="HOGENOM" id="CLU_114342_2_1_3"/>
<dbReference type="OrthoDB" id="9815830at2"/>
<dbReference type="Proteomes" id="UP000002712">
    <property type="component" value="Chromosome"/>
</dbReference>
<dbReference type="GO" id="GO:0005886">
    <property type="term" value="C:plasma membrane"/>
    <property type="evidence" value="ECO:0007669"/>
    <property type="project" value="UniProtKB-SubCell"/>
</dbReference>
<dbReference type="GO" id="GO:0062054">
    <property type="term" value="F:fluoride channel activity"/>
    <property type="evidence" value="ECO:0007669"/>
    <property type="project" value="UniProtKB-UniRule"/>
</dbReference>
<dbReference type="GO" id="GO:0046872">
    <property type="term" value="F:metal ion binding"/>
    <property type="evidence" value="ECO:0007669"/>
    <property type="project" value="UniProtKB-KW"/>
</dbReference>
<dbReference type="GO" id="GO:0140114">
    <property type="term" value="P:cellular detoxification of fluoride"/>
    <property type="evidence" value="ECO:0007669"/>
    <property type="project" value="UniProtKB-UniRule"/>
</dbReference>
<dbReference type="HAMAP" id="MF_00454">
    <property type="entry name" value="FluC"/>
    <property type="match status" value="1"/>
</dbReference>
<dbReference type="InterPro" id="IPR003691">
    <property type="entry name" value="FluC"/>
</dbReference>
<dbReference type="PANTHER" id="PTHR28259">
    <property type="entry name" value="FLUORIDE EXPORT PROTEIN 1-RELATED"/>
    <property type="match status" value="1"/>
</dbReference>
<dbReference type="PANTHER" id="PTHR28259:SF1">
    <property type="entry name" value="FLUORIDE EXPORT PROTEIN 1-RELATED"/>
    <property type="match status" value="1"/>
</dbReference>
<dbReference type="Pfam" id="PF02537">
    <property type="entry name" value="CRCB"/>
    <property type="match status" value="1"/>
</dbReference>
<proteinExistence type="inferred from homology"/>
<protein>
    <recommendedName>
        <fullName evidence="1">Fluoride-specific ion channel FluC 2</fullName>
    </recommendedName>
</protein>
<organism>
    <name type="scientific">Synechococcus sp. (strain CC9902)</name>
    <dbReference type="NCBI Taxonomy" id="316279"/>
    <lineage>
        <taxon>Bacteria</taxon>
        <taxon>Bacillati</taxon>
        <taxon>Cyanobacteriota</taxon>
        <taxon>Cyanophyceae</taxon>
        <taxon>Synechococcales</taxon>
        <taxon>Synechococcaceae</taxon>
        <taxon>Synechococcus</taxon>
    </lineage>
</organism>
<gene>
    <name evidence="1" type="primary">fluC2</name>
    <name evidence="1" type="synonym">crcB2</name>
    <name type="ordered locus">Syncc9902_0136</name>
</gene>
<evidence type="ECO:0000255" key="1">
    <source>
        <dbReference type="HAMAP-Rule" id="MF_00454"/>
    </source>
</evidence>
<evidence type="ECO:0000305" key="2"/>
<reference key="1">
    <citation type="submission" date="2005-08" db="EMBL/GenBank/DDBJ databases">
        <title>Complete sequence of Synechococcus sp. CC9902.</title>
        <authorList>
            <person name="Copeland A."/>
            <person name="Lucas S."/>
            <person name="Lapidus A."/>
            <person name="Barry K."/>
            <person name="Detter J.C."/>
            <person name="Glavina T."/>
            <person name="Hammon N."/>
            <person name="Israni S."/>
            <person name="Pitluck S."/>
            <person name="Martinez M."/>
            <person name="Schmutz J."/>
            <person name="Larimer F."/>
            <person name="Land M."/>
            <person name="Kyrpides N."/>
            <person name="Ivanova N."/>
            <person name="Richardson P."/>
        </authorList>
    </citation>
    <scope>NUCLEOTIDE SEQUENCE [LARGE SCALE GENOMIC DNA]</scope>
    <source>
        <strain>CC9902</strain>
    </source>
</reference>
<sequence length="134" mass="14173">MAEQQQQRSLSAELQELVLVALGAVPGALLRWQVALHWADRHLLVNVLGAALLGLLAGLPAAPRRQLLVGIGFCGSLTTFSSWMVDAMQLISAGQIAEAFGLIGLTLGLGVGAAALGFWLGQRLRLLKLPRSEP</sequence>
<name>FLUC2_SYNS9</name>